<name>RL32_DROAZ</name>
<protein>
    <recommendedName>
        <fullName evidence="1">Large ribosomal subunit protein eL32</fullName>
    </recommendedName>
    <alternativeName>
        <fullName>60S ribosomal protein L32</fullName>
    </alternativeName>
    <alternativeName>
        <fullName>Ribosomal protein 49</fullName>
    </alternativeName>
</protein>
<keyword id="KW-0687">Ribonucleoprotein</keyword>
<keyword id="KW-0689">Ribosomal protein</keyword>
<organism>
    <name type="scientific">Drosophila azteca</name>
    <name type="common">Fruit fly</name>
    <dbReference type="NCBI Taxonomy" id="7249"/>
    <lineage>
        <taxon>Eukaryota</taxon>
        <taxon>Metazoa</taxon>
        <taxon>Ecdysozoa</taxon>
        <taxon>Arthropoda</taxon>
        <taxon>Hexapoda</taxon>
        <taxon>Insecta</taxon>
        <taxon>Pterygota</taxon>
        <taxon>Neoptera</taxon>
        <taxon>Endopterygota</taxon>
        <taxon>Diptera</taxon>
        <taxon>Brachycera</taxon>
        <taxon>Muscomorpha</taxon>
        <taxon>Ephydroidea</taxon>
        <taxon>Drosophilidae</taxon>
        <taxon>Drosophila</taxon>
        <taxon>Sophophora</taxon>
    </lineage>
</organism>
<reference key="1">
    <citation type="journal article" date="1998" name="Mol. Phylogenet. Evol.">
        <title>Molecular and chromosomal phylogeny in the obscura group of Drosophila inferred from sequences of the rp49 gene region.</title>
        <authorList>
            <person name="Ramos-Onsins S."/>
            <person name="Segarra C."/>
            <person name="Rozas J."/>
            <person name="Aguade M."/>
        </authorList>
    </citation>
    <scope>NUCLEOTIDE SEQUENCE [GENOMIC DNA]</scope>
</reference>
<gene>
    <name type="primary">RpL32</name>
    <name type="synonym">rp49</name>
</gene>
<evidence type="ECO:0000305" key="1"/>
<comment type="similarity">
    <text evidence="1">Belongs to the eukaryotic ribosomal protein eL32 family.</text>
</comment>
<dbReference type="EMBL" id="Y09705">
    <property type="protein sequence ID" value="CAA70876.1"/>
    <property type="molecule type" value="Genomic_DNA"/>
</dbReference>
<dbReference type="SMR" id="P84325"/>
<dbReference type="GO" id="GO:0022625">
    <property type="term" value="C:cytosolic large ribosomal subunit"/>
    <property type="evidence" value="ECO:0007669"/>
    <property type="project" value="TreeGrafter"/>
</dbReference>
<dbReference type="GO" id="GO:0003735">
    <property type="term" value="F:structural constituent of ribosome"/>
    <property type="evidence" value="ECO:0007669"/>
    <property type="project" value="InterPro"/>
</dbReference>
<dbReference type="GO" id="GO:0006412">
    <property type="term" value="P:translation"/>
    <property type="evidence" value="ECO:0007669"/>
    <property type="project" value="InterPro"/>
</dbReference>
<dbReference type="CDD" id="cd00513">
    <property type="entry name" value="Ribosomal_L32_L32e"/>
    <property type="match status" value="1"/>
</dbReference>
<dbReference type="InterPro" id="IPR001515">
    <property type="entry name" value="Ribosomal_eL32"/>
</dbReference>
<dbReference type="InterPro" id="IPR018263">
    <property type="entry name" value="Ribosomal_eL32_CS"/>
</dbReference>
<dbReference type="InterPro" id="IPR036351">
    <property type="entry name" value="Ribosomal_eL32_sf"/>
</dbReference>
<dbReference type="PANTHER" id="PTHR23413">
    <property type="entry name" value="60S RIBOSOMAL PROTEIN L32 AND DNA-DIRECTED RNA POLYMERASE II, SUBUNIT N"/>
    <property type="match status" value="1"/>
</dbReference>
<dbReference type="PANTHER" id="PTHR23413:SF1">
    <property type="entry name" value="RIBOSOMAL PROTEIN L32"/>
    <property type="match status" value="1"/>
</dbReference>
<dbReference type="Pfam" id="PF01655">
    <property type="entry name" value="Ribosomal_L32e"/>
    <property type="match status" value="1"/>
</dbReference>
<dbReference type="SMART" id="SM01393">
    <property type="entry name" value="Ribosomal_L32e"/>
    <property type="match status" value="1"/>
</dbReference>
<dbReference type="SUPFAM" id="SSF52042">
    <property type="entry name" value="Ribosomal protein L32e"/>
    <property type="match status" value="1"/>
</dbReference>
<dbReference type="PROSITE" id="PS00580">
    <property type="entry name" value="RIBOSOMAL_L32E"/>
    <property type="match status" value="1"/>
</dbReference>
<sequence length="134" mass="16062">MTIRPAYRPKIIKKRTKHFIRHQSDRYAKLSHKWRKPKGIDNRVRRRFKGQYLMPNIGYGSNKRTRHMLPTGFKKFLVHNVRELEVLLMQNRVYCGEIAHAVSSKKRKEIVERAKQLSIRLTNPNGRLRSQENE</sequence>
<accession>P84325</accession>
<accession>P46615</accession>
<proteinExistence type="inferred from homology"/>
<feature type="chain" id="PRO_0000131124" description="Large ribosomal subunit protein eL32">
    <location>
        <begin position="1"/>
        <end position="134"/>
    </location>
</feature>